<sequence length="615" mass="67385">MSKYTILDKINTPSDLKLIPESQLKILSAELRAFLVDTLDVSGGHFASSLGATELTVALHYVYNAPYDNIVWDVGHQTYIHKILTGRKDKLVTIKKDGGISGFPKRSESEYDTFGVGHSSTSISAALGMAIADRLQGKSSNTVAVIGDGAITGGMAFEALNHAGGIKEDILVILNDNEMSISDNVGGLSAHFSKIISGGFYNSIREKGKEVLKNIPPIFEFVKKIETQTKGMFVPANFFEDLGFYYVGPIDGHDVTELVKTLRILKDHKGPKLLHVITKKGKGYTKAESDPIKFHHVAPSFHSGENITTKISKPTYSNIFGDWICQKAAKDKRLVGITPAMKEGSDLIRFSQLYPHRYFDVAIAEQHAVTFAGGLACQGLKPVVAIYSTFLQRAYDQVIHDIALQNLDVLYAVDRAGLVGADGATHDGSFDLAFMRCIPNHVIMTPSDENETYHMLEFGYEYNGPAMVRYPRGAGIGAEITGSLDLELGKAKIVKQGSKIAILNFGTLLPLAKQLAEKYHATVIDMRFVKPLDKIMLDKVSQTHEIILTLEENCIAGGAGSAVNEYFVAKDLSNKIIVRNFGLQDKFLNHGTKDLLLAQSKLCVENISKELDKLI</sequence>
<proteinExistence type="inferred from homology"/>
<name>DXS_FRATH</name>
<feature type="chain" id="PRO_0000256419" description="1-deoxy-D-xylulose-5-phosphate synthase">
    <location>
        <begin position="1"/>
        <end position="615"/>
    </location>
</feature>
<feature type="binding site" evidence="1">
    <location>
        <position position="76"/>
    </location>
    <ligand>
        <name>thiamine diphosphate</name>
        <dbReference type="ChEBI" id="CHEBI:58937"/>
    </ligand>
</feature>
<feature type="binding site" evidence="1">
    <location>
        <begin position="117"/>
        <end position="119"/>
    </location>
    <ligand>
        <name>thiamine diphosphate</name>
        <dbReference type="ChEBI" id="CHEBI:58937"/>
    </ligand>
</feature>
<feature type="binding site" evidence="1">
    <location>
        <position position="148"/>
    </location>
    <ligand>
        <name>Mg(2+)</name>
        <dbReference type="ChEBI" id="CHEBI:18420"/>
    </ligand>
</feature>
<feature type="binding site" evidence="1">
    <location>
        <begin position="149"/>
        <end position="150"/>
    </location>
    <ligand>
        <name>thiamine diphosphate</name>
        <dbReference type="ChEBI" id="CHEBI:58937"/>
    </ligand>
</feature>
<feature type="binding site" evidence="1">
    <location>
        <position position="177"/>
    </location>
    <ligand>
        <name>Mg(2+)</name>
        <dbReference type="ChEBI" id="CHEBI:18420"/>
    </ligand>
</feature>
<feature type="binding site" evidence="1">
    <location>
        <position position="177"/>
    </location>
    <ligand>
        <name>thiamine diphosphate</name>
        <dbReference type="ChEBI" id="CHEBI:58937"/>
    </ligand>
</feature>
<feature type="binding site" evidence="1">
    <location>
        <position position="284"/>
    </location>
    <ligand>
        <name>thiamine diphosphate</name>
        <dbReference type="ChEBI" id="CHEBI:58937"/>
    </ligand>
</feature>
<feature type="binding site" evidence="1">
    <location>
        <position position="365"/>
    </location>
    <ligand>
        <name>thiamine diphosphate</name>
        <dbReference type="ChEBI" id="CHEBI:58937"/>
    </ligand>
</feature>
<protein>
    <recommendedName>
        <fullName evidence="1">1-deoxy-D-xylulose-5-phosphate synthase</fullName>
        <ecNumber evidence="1">2.2.1.7</ecNumber>
    </recommendedName>
    <alternativeName>
        <fullName evidence="1">1-deoxyxylulose-5-phosphate synthase</fullName>
        <shortName evidence="1">DXP synthase</shortName>
        <shortName evidence="1">DXPS</shortName>
    </alternativeName>
</protein>
<keyword id="KW-0414">Isoprene biosynthesis</keyword>
<keyword id="KW-0460">Magnesium</keyword>
<keyword id="KW-0479">Metal-binding</keyword>
<keyword id="KW-1185">Reference proteome</keyword>
<keyword id="KW-0784">Thiamine biosynthesis</keyword>
<keyword id="KW-0786">Thiamine pyrophosphate</keyword>
<keyword id="KW-0808">Transferase</keyword>
<accession>Q2A3D3</accession>
<dbReference type="EC" id="2.2.1.7" evidence="1"/>
<dbReference type="EMBL" id="AM233362">
    <property type="protein sequence ID" value="CAJ79511.1"/>
    <property type="molecule type" value="Genomic_DNA"/>
</dbReference>
<dbReference type="RefSeq" id="WP_003016001.1">
    <property type="nucleotide sequence ID" value="NZ_CP009694.1"/>
</dbReference>
<dbReference type="SMR" id="Q2A3D3"/>
<dbReference type="KEGG" id="ftl:FTL_1072"/>
<dbReference type="UniPathway" id="UPA00064">
    <property type="reaction ID" value="UER00091"/>
</dbReference>
<dbReference type="Proteomes" id="UP000001944">
    <property type="component" value="Chromosome"/>
</dbReference>
<dbReference type="GO" id="GO:0005829">
    <property type="term" value="C:cytosol"/>
    <property type="evidence" value="ECO:0007669"/>
    <property type="project" value="TreeGrafter"/>
</dbReference>
<dbReference type="GO" id="GO:0008661">
    <property type="term" value="F:1-deoxy-D-xylulose-5-phosphate synthase activity"/>
    <property type="evidence" value="ECO:0007669"/>
    <property type="project" value="UniProtKB-UniRule"/>
</dbReference>
<dbReference type="GO" id="GO:0000287">
    <property type="term" value="F:magnesium ion binding"/>
    <property type="evidence" value="ECO:0007669"/>
    <property type="project" value="UniProtKB-UniRule"/>
</dbReference>
<dbReference type="GO" id="GO:0030976">
    <property type="term" value="F:thiamine pyrophosphate binding"/>
    <property type="evidence" value="ECO:0007669"/>
    <property type="project" value="UniProtKB-UniRule"/>
</dbReference>
<dbReference type="GO" id="GO:0052865">
    <property type="term" value="P:1-deoxy-D-xylulose 5-phosphate biosynthetic process"/>
    <property type="evidence" value="ECO:0007669"/>
    <property type="project" value="UniProtKB-UniPathway"/>
</dbReference>
<dbReference type="GO" id="GO:0019288">
    <property type="term" value="P:isopentenyl diphosphate biosynthetic process, methylerythritol 4-phosphate pathway"/>
    <property type="evidence" value="ECO:0007669"/>
    <property type="project" value="TreeGrafter"/>
</dbReference>
<dbReference type="GO" id="GO:0016114">
    <property type="term" value="P:terpenoid biosynthetic process"/>
    <property type="evidence" value="ECO:0007669"/>
    <property type="project" value="UniProtKB-UniRule"/>
</dbReference>
<dbReference type="GO" id="GO:0009228">
    <property type="term" value="P:thiamine biosynthetic process"/>
    <property type="evidence" value="ECO:0007669"/>
    <property type="project" value="UniProtKB-UniRule"/>
</dbReference>
<dbReference type="CDD" id="cd02007">
    <property type="entry name" value="TPP_DXS"/>
    <property type="match status" value="1"/>
</dbReference>
<dbReference type="CDD" id="cd07033">
    <property type="entry name" value="TPP_PYR_DXS_TK_like"/>
    <property type="match status" value="1"/>
</dbReference>
<dbReference type="FunFam" id="3.40.50.970:FF:000005">
    <property type="entry name" value="1-deoxy-D-xylulose-5-phosphate synthase"/>
    <property type="match status" value="1"/>
</dbReference>
<dbReference type="Gene3D" id="3.40.50.920">
    <property type="match status" value="1"/>
</dbReference>
<dbReference type="Gene3D" id="3.40.50.970">
    <property type="match status" value="2"/>
</dbReference>
<dbReference type="HAMAP" id="MF_00315">
    <property type="entry name" value="DXP_synth"/>
    <property type="match status" value="1"/>
</dbReference>
<dbReference type="InterPro" id="IPR005477">
    <property type="entry name" value="Dxylulose-5-P_synthase"/>
</dbReference>
<dbReference type="InterPro" id="IPR029061">
    <property type="entry name" value="THDP-binding"/>
</dbReference>
<dbReference type="InterPro" id="IPR009014">
    <property type="entry name" value="Transketo_C/PFOR_II"/>
</dbReference>
<dbReference type="InterPro" id="IPR005475">
    <property type="entry name" value="Transketolase-like_Pyr-bd"/>
</dbReference>
<dbReference type="InterPro" id="IPR020826">
    <property type="entry name" value="Transketolase_BS"/>
</dbReference>
<dbReference type="InterPro" id="IPR033248">
    <property type="entry name" value="Transketolase_C"/>
</dbReference>
<dbReference type="InterPro" id="IPR049557">
    <property type="entry name" value="Transketolase_CS"/>
</dbReference>
<dbReference type="NCBIfam" id="TIGR00204">
    <property type="entry name" value="dxs"/>
    <property type="match status" value="1"/>
</dbReference>
<dbReference type="NCBIfam" id="NF003933">
    <property type="entry name" value="PRK05444.2-2"/>
    <property type="match status" value="1"/>
</dbReference>
<dbReference type="PANTHER" id="PTHR43322">
    <property type="entry name" value="1-D-DEOXYXYLULOSE 5-PHOSPHATE SYNTHASE-RELATED"/>
    <property type="match status" value="1"/>
</dbReference>
<dbReference type="PANTHER" id="PTHR43322:SF5">
    <property type="entry name" value="1-DEOXY-D-XYLULOSE-5-PHOSPHATE SYNTHASE, CHLOROPLASTIC"/>
    <property type="match status" value="1"/>
</dbReference>
<dbReference type="Pfam" id="PF13292">
    <property type="entry name" value="DXP_synthase_N"/>
    <property type="match status" value="1"/>
</dbReference>
<dbReference type="Pfam" id="PF02779">
    <property type="entry name" value="Transket_pyr"/>
    <property type="match status" value="1"/>
</dbReference>
<dbReference type="Pfam" id="PF02780">
    <property type="entry name" value="Transketolase_C"/>
    <property type="match status" value="1"/>
</dbReference>
<dbReference type="SMART" id="SM00861">
    <property type="entry name" value="Transket_pyr"/>
    <property type="match status" value="1"/>
</dbReference>
<dbReference type="SUPFAM" id="SSF52518">
    <property type="entry name" value="Thiamin diphosphate-binding fold (THDP-binding)"/>
    <property type="match status" value="2"/>
</dbReference>
<dbReference type="SUPFAM" id="SSF52922">
    <property type="entry name" value="TK C-terminal domain-like"/>
    <property type="match status" value="1"/>
</dbReference>
<dbReference type="PROSITE" id="PS00801">
    <property type="entry name" value="TRANSKETOLASE_1"/>
    <property type="match status" value="1"/>
</dbReference>
<dbReference type="PROSITE" id="PS00802">
    <property type="entry name" value="TRANSKETOLASE_2"/>
    <property type="match status" value="1"/>
</dbReference>
<comment type="function">
    <text evidence="1">Catalyzes the acyloin condensation reaction between C atoms 2 and 3 of pyruvate and glyceraldehyde 3-phosphate to yield 1-deoxy-D-xylulose-5-phosphate (DXP).</text>
</comment>
<comment type="catalytic activity">
    <reaction evidence="1">
        <text>D-glyceraldehyde 3-phosphate + pyruvate + H(+) = 1-deoxy-D-xylulose 5-phosphate + CO2</text>
        <dbReference type="Rhea" id="RHEA:12605"/>
        <dbReference type="ChEBI" id="CHEBI:15361"/>
        <dbReference type="ChEBI" id="CHEBI:15378"/>
        <dbReference type="ChEBI" id="CHEBI:16526"/>
        <dbReference type="ChEBI" id="CHEBI:57792"/>
        <dbReference type="ChEBI" id="CHEBI:59776"/>
        <dbReference type="EC" id="2.2.1.7"/>
    </reaction>
</comment>
<comment type="cofactor">
    <cofactor evidence="1">
        <name>Mg(2+)</name>
        <dbReference type="ChEBI" id="CHEBI:18420"/>
    </cofactor>
    <text evidence="1">Binds 1 Mg(2+) ion per subunit.</text>
</comment>
<comment type="cofactor">
    <cofactor evidence="1">
        <name>thiamine diphosphate</name>
        <dbReference type="ChEBI" id="CHEBI:58937"/>
    </cofactor>
    <text evidence="1">Binds 1 thiamine pyrophosphate per subunit.</text>
</comment>
<comment type="pathway">
    <text evidence="1">Metabolic intermediate biosynthesis; 1-deoxy-D-xylulose 5-phosphate biosynthesis; 1-deoxy-D-xylulose 5-phosphate from D-glyceraldehyde 3-phosphate and pyruvate: step 1/1.</text>
</comment>
<comment type="subunit">
    <text evidence="1">Homodimer.</text>
</comment>
<comment type="similarity">
    <text evidence="1">Belongs to the transketolase family. DXPS subfamily.</text>
</comment>
<evidence type="ECO:0000255" key="1">
    <source>
        <dbReference type="HAMAP-Rule" id="MF_00315"/>
    </source>
</evidence>
<gene>
    <name evidence="1" type="primary">dxs</name>
    <name type="ordered locus">FTL_1072</name>
</gene>
<reference key="1">
    <citation type="submission" date="2006-03" db="EMBL/GenBank/DDBJ databases">
        <title>Complete genome sequence of Francisella tularensis LVS (Live Vaccine Strain).</title>
        <authorList>
            <person name="Chain P."/>
            <person name="Larimer F."/>
            <person name="Land M."/>
            <person name="Stilwagen S."/>
            <person name="Larsson P."/>
            <person name="Bearden S."/>
            <person name="Chu M."/>
            <person name="Oyston P."/>
            <person name="Forsman M."/>
            <person name="Andersson S."/>
            <person name="Lindler L."/>
            <person name="Titball R."/>
            <person name="Garcia E."/>
        </authorList>
    </citation>
    <scope>NUCLEOTIDE SEQUENCE [LARGE SCALE GENOMIC DNA]</scope>
    <source>
        <strain>LVS</strain>
    </source>
</reference>
<organism>
    <name type="scientific">Francisella tularensis subsp. holarctica (strain LVS)</name>
    <dbReference type="NCBI Taxonomy" id="376619"/>
    <lineage>
        <taxon>Bacteria</taxon>
        <taxon>Pseudomonadati</taxon>
        <taxon>Pseudomonadota</taxon>
        <taxon>Gammaproteobacteria</taxon>
        <taxon>Thiotrichales</taxon>
        <taxon>Francisellaceae</taxon>
        <taxon>Francisella</taxon>
    </lineage>
</organism>